<name>PHYE_IPONI</name>
<gene>
    <name type="primary">PHYE</name>
</gene>
<organism>
    <name type="scientific">Ipomoea nil</name>
    <name type="common">Japanese morning glory</name>
    <name type="synonym">Pharbitis nil</name>
    <dbReference type="NCBI Taxonomy" id="35883"/>
    <lineage>
        <taxon>Eukaryota</taxon>
        <taxon>Viridiplantae</taxon>
        <taxon>Streptophyta</taxon>
        <taxon>Embryophyta</taxon>
        <taxon>Tracheophyta</taxon>
        <taxon>Spermatophyta</taxon>
        <taxon>Magnoliopsida</taxon>
        <taxon>eudicotyledons</taxon>
        <taxon>Gunneridae</taxon>
        <taxon>Pentapetalae</taxon>
        <taxon>asterids</taxon>
        <taxon>lamiids</taxon>
        <taxon>Solanales</taxon>
        <taxon>Convolvulaceae</taxon>
        <taxon>Ipomoeeae</taxon>
        <taxon>Ipomoea</taxon>
    </lineage>
</organism>
<reference key="1">
    <citation type="submission" date="1996-01" db="EMBL/GenBank/DDBJ databases">
        <authorList>
            <person name="Zheng C.C."/>
            <person name="O'Neill S.D."/>
        </authorList>
    </citation>
    <scope>NUCLEOTIDE SEQUENCE [MRNA]</scope>
    <source>
        <tissue>Seedling cotyledon</tissue>
    </source>
</reference>
<keyword id="KW-0157">Chromophore</keyword>
<keyword id="KW-0600">Photoreceptor protein</keyword>
<keyword id="KW-0675">Receptor</keyword>
<keyword id="KW-0677">Repeat</keyword>
<keyword id="KW-0716">Sensory transduction</keyword>
<keyword id="KW-0804">Transcription</keyword>
<keyword id="KW-0805">Transcription regulation</keyword>
<protein>
    <recommendedName>
        <fullName>Phytochrome E</fullName>
    </recommendedName>
</protein>
<comment type="function">
    <text>Regulatory photoreceptor which exists in two forms that are reversibly interconvertible by light: the Pr form that absorbs maximally in the red region of the spectrum and the Pfr form that absorbs maximally in the far-red region. Photoconversion of Pr to Pfr induces an array of morphogenic responses, whereas reconversion of Pfr to Pr cancels the induction of those responses. Pfr controls the expression of a number of nuclear genes including those encoding the small subunit of ribulose-bisphosphate carboxylase, chlorophyll A/B binding protein, protochlorophyllide reductase, rRNA, etc. It also controls the expression of its own gene(s) in a negative feedback fashion.</text>
</comment>
<comment type="subunit">
    <text>Homodimer.</text>
</comment>
<comment type="PTM">
    <text evidence="1">Contains one covalently linked phytochromobilin chromophore.</text>
</comment>
<comment type="similarity">
    <text evidence="5">Belongs to the phytochrome family.</text>
</comment>
<feature type="chain" id="PRO_0000171982" description="Phytochrome E">
    <location>
        <begin position="1"/>
        <end position="1115"/>
    </location>
</feature>
<feature type="domain" description="GAF">
    <location>
        <begin position="213"/>
        <end position="383"/>
    </location>
</feature>
<feature type="domain" description="PAS 1" evidence="3">
    <location>
        <begin position="598"/>
        <end position="669"/>
    </location>
</feature>
<feature type="domain" description="PAC" evidence="4">
    <location>
        <begin position="672"/>
        <end position="728"/>
    </location>
</feature>
<feature type="domain" description="PAS 2" evidence="3">
    <location>
        <begin position="732"/>
        <end position="803"/>
    </location>
</feature>
<feature type="domain" description="Histidine kinase" evidence="2">
    <location>
        <begin position="880"/>
        <end position="1100"/>
    </location>
</feature>
<feature type="binding site" description="covalent" evidence="1">
    <location>
        <position position="318"/>
    </location>
    <ligand>
        <name>phytochromobilin</name>
        <dbReference type="ChEBI" id="CHEBI:189064"/>
    </ligand>
</feature>
<evidence type="ECO:0000250" key="1"/>
<evidence type="ECO:0000255" key="2">
    <source>
        <dbReference type="PROSITE-ProRule" id="PRU00107"/>
    </source>
</evidence>
<evidence type="ECO:0000255" key="3">
    <source>
        <dbReference type="PROSITE-ProRule" id="PRU00140"/>
    </source>
</evidence>
<evidence type="ECO:0000255" key="4">
    <source>
        <dbReference type="PROSITE-ProRule" id="PRU00141"/>
    </source>
</evidence>
<evidence type="ECO:0000305" key="5"/>
<proteinExistence type="evidence at transcript level"/>
<accession>P55004</accession>
<dbReference type="EMBL" id="U39787">
    <property type="protein sequence ID" value="AAA84970.1"/>
    <property type="molecule type" value="mRNA"/>
</dbReference>
<dbReference type="SMR" id="P55004"/>
<dbReference type="GO" id="GO:0000155">
    <property type="term" value="F:phosphorelay sensor kinase activity"/>
    <property type="evidence" value="ECO:0007669"/>
    <property type="project" value="InterPro"/>
</dbReference>
<dbReference type="GO" id="GO:0009881">
    <property type="term" value="F:photoreceptor activity"/>
    <property type="evidence" value="ECO:0007669"/>
    <property type="project" value="UniProtKB-KW"/>
</dbReference>
<dbReference type="GO" id="GO:0042803">
    <property type="term" value="F:protein homodimerization activity"/>
    <property type="evidence" value="ECO:0007669"/>
    <property type="project" value="InterPro"/>
</dbReference>
<dbReference type="GO" id="GO:0009584">
    <property type="term" value="P:detection of visible light"/>
    <property type="evidence" value="ECO:0007669"/>
    <property type="project" value="InterPro"/>
</dbReference>
<dbReference type="GO" id="GO:0009585">
    <property type="term" value="P:red, far-red light phototransduction"/>
    <property type="evidence" value="ECO:0007669"/>
    <property type="project" value="InterPro"/>
</dbReference>
<dbReference type="GO" id="GO:0006355">
    <property type="term" value="P:regulation of DNA-templated transcription"/>
    <property type="evidence" value="ECO:0007669"/>
    <property type="project" value="InterPro"/>
</dbReference>
<dbReference type="CDD" id="cd16932">
    <property type="entry name" value="HATPase_Phy-like"/>
    <property type="match status" value="1"/>
</dbReference>
<dbReference type="CDD" id="cd00082">
    <property type="entry name" value="HisKA"/>
    <property type="match status" value="1"/>
</dbReference>
<dbReference type="CDD" id="cd00130">
    <property type="entry name" value="PAS"/>
    <property type="match status" value="2"/>
</dbReference>
<dbReference type="FunFam" id="3.30.450.20:FF:000034">
    <property type="entry name" value="Phytochrome"/>
    <property type="match status" value="1"/>
</dbReference>
<dbReference type="FunFam" id="3.30.450.20:FF:000039">
    <property type="entry name" value="Phytochrome"/>
    <property type="match status" value="1"/>
</dbReference>
<dbReference type="FunFam" id="3.30.450.270:FF:000001">
    <property type="entry name" value="Phytochrome"/>
    <property type="match status" value="1"/>
</dbReference>
<dbReference type="Gene3D" id="3.30.450.270">
    <property type="match status" value="1"/>
</dbReference>
<dbReference type="Gene3D" id="3.30.450.40">
    <property type="match status" value="1"/>
</dbReference>
<dbReference type="Gene3D" id="3.30.565.10">
    <property type="entry name" value="Histidine kinase-like ATPase, C-terminal domain"/>
    <property type="match status" value="1"/>
</dbReference>
<dbReference type="Gene3D" id="3.30.450.20">
    <property type="entry name" value="PAS domain"/>
    <property type="match status" value="3"/>
</dbReference>
<dbReference type="InterPro" id="IPR003018">
    <property type="entry name" value="GAF"/>
</dbReference>
<dbReference type="InterPro" id="IPR029016">
    <property type="entry name" value="GAF-like_dom_sf"/>
</dbReference>
<dbReference type="InterPro" id="IPR036890">
    <property type="entry name" value="HATPase_C_sf"/>
</dbReference>
<dbReference type="InterPro" id="IPR005467">
    <property type="entry name" value="His_kinase_dom"/>
</dbReference>
<dbReference type="InterPro" id="IPR003661">
    <property type="entry name" value="HisK_dim/P_dom"/>
</dbReference>
<dbReference type="InterPro" id="IPR000014">
    <property type="entry name" value="PAS"/>
</dbReference>
<dbReference type="InterPro" id="IPR000700">
    <property type="entry name" value="PAS-assoc_C"/>
</dbReference>
<dbReference type="InterPro" id="IPR035965">
    <property type="entry name" value="PAS-like_dom_sf"/>
</dbReference>
<dbReference type="InterPro" id="IPR013654">
    <property type="entry name" value="PAS_2"/>
</dbReference>
<dbReference type="InterPro" id="IPR013767">
    <property type="entry name" value="PAS_fold"/>
</dbReference>
<dbReference type="InterPro" id="IPR044767">
    <property type="entry name" value="Phy_HATPase-like"/>
</dbReference>
<dbReference type="InterPro" id="IPR016132">
    <property type="entry name" value="Phyto_chromo_attachment"/>
</dbReference>
<dbReference type="InterPro" id="IPR013516">
    <property type="entry name" value="Phyto_chromo_BS"/>
</dbReference>
<dbReference type="InterPro" id="IPR001294">
    <property type="entry name" value="Phytochrome"/>
</dbReference>
<dbReference type="InterPro" id="IPR012129">
    <property type="entry name" value="Phytochrome_A-E"/>
</dbReference>
<dbReference type="InterPro" id="IPR013515">
    <property type="entry name" value="Phytochrome_cen-reg"/>
</dbReference>
<dbReference type="InterPro" id="IPR043150">
    <property type="entry name" value="Phytochrome_PHY_sf"/>
</dbReference>
<dbReference type="NCBIfam" id="TIGR00229">
    <property type="entry name" value="sensory_box"/>
    <property type="match status" value="1"/>
</dbReference>
<dbReference type="PANTHER" id="PTHR47876">
    <property type="entry name" value="OS08G0260000 PROTEIN"/>
    <property type="match status" value="1"/>
</dbReference>
<dbReference type="PANTHER" id="PTHR47876:SF3">
    <property type="entry name" value="PHYTOCHROME 1"/>
    <property type="match status" value="1"/>
</dbReference>
<dbReference type="Pfam" id="PF01590">
    <property type="entry name" value="GAF"/>
    <property type="match status" value="1"/>
</dbReference>
<dbReference type="Pfam" id="PF02518">
    <property type="entry name" value="HATPase_c"/>
    <property type="match status" value="1"/>
</dbReference>
<dbReference type="Pfam" id="PF00512">
    <property type="entry name" value="HisKA"/>
    <property type="match status" value="1"/>
</dbReference>
<dbReference type="Pfam" id="PF00989">
    <property type="entry name" value="PAS"/>
    <property type="match status" value="2"/>
</dbReference>
<dbReference type="Pfam" id="PF08446">
    <property type="entry name" value="PAS_2"/>
    <property type="match status" value="1"/>
</dbReference>
<dbReference type="Pfam" id="PF00360">
    <property type="entry name" value="PHY"/>
    <property type="match status" value="1"/>
</dbReference>
<dbReference type="PIRSF" id="PIRSF000084">
    <property type="entry name" value="Phytochrome"/>
    <property type="match status" value="1"/>
</dbReference>
<dbReference type="PRINTS" id="PR01033">
    <property type="entry name" value="PHYTOCHROME"/>
</dbReference>
<dbReference type="SMART" id="SM00065">
    <property type="entry name" value="GAF"/>
    <property type="match status" value="1"/>
</dbReference>
<dbReference type="SMART" id="SM00387">
    <property type="entry name" value="HATPase_c"/>
    <property type="match status" value="1"/>
</dbReference>
<dbReference type="SMART" id="SM00388">
    <property type="entry name" value="HisKA"/>
    <property type="match status" value="1"/>
</dbReference>
<dbReference type="SMART" id="SM00091">
    <property type="entry name" value="PAS"/>
    <property type="match status" value="2"/>
</dbReference>
<dbReference type="SUPFAM" id="SSF55874">
    <property type="entry name" value="ATPase domain of HSP90 chaperone/DNA topoisomerase II/histidine kinase"/>
    <property type="match status" value="1"/>
</dbReference>
<dbReference type="SUPFAM" id="SSF55781">
    <property type="entry name" value="GAF domain-like"/>
    <property type="match status" value="2"/>
</dbReference>
<dbReference type="SUPFAM" id="SSF55785">
    <property type="entry name" value="PYP-like sensor domain (PAS domain)"/>
    <property type="match status" value="3"/>
</dbReference>
<dbReference type="PROSITE" id="PS50109">
    <property type="entry name" value="HIS_KIN"/>
    <property type="match status" value="1"/>
</dbReference>
<dbReference type="PROSITE" id="PS50113">
    <property type="entry name" value="PAC"/>
    <property type="match status" value="1"/>
</dbReference>
<dbReference type="PROSITE" id="PS50112">
    <property type="entry name" value="PAS"/>
    <property type="match status" value="2"/>
</dbReference>
<dbReference type="PROSITE" id="PS00245">
    <property type="entry name" value="PHYTOCHROME_1"/>
    <property type="match status" value="1"/>
</dbReference>
<dbReference type="PROSITE" id="PS50046">
    <property type="entry name" value="PHYTOCHROME_2"/>
    <property type="match status" value="1"/>
</dbReference>
<sequence>MENYGKAVTFSSSATSNLNTGKAIAQYNADAKLMAEFEQSRESGKSFDYSRSVIHAPQNVTEEEMTAYLSRIQRGGLIQPFGCMLAIEEPSFKIVGFSENCFDLLGLKSGVEPPERMSLIGIDARTLFTLSSRASLAKAVASREISLLNPIWVHSKINQKPFYAVLHRIDVGIVIDLEPANSADPALLLAGAVQSQKLAVRAISRLQSLPGGDIGTLCDTVVEDVQKLTGYDRVMVYKFHDDSHGEVVSEIRRSDLEPYLGLHYPATDIPQAARFLFKQNRVRMICDCNAQPVKVLQCEELKQPLCLVNSTLRSPHGCHTKYMANMGSIASLVMAVVINSSESMKLWGLVVCHHTSPRYVPFPLRYACEFLMQAFSLQLYMELQLASQLAEKKILQTQTLLCDMLLRDAPFGIVTQTPSIMDLVRCDGAALYYNGKCWLLGVTPTETQVKDIAEWLLHNHGDSTGLSTDCLSDAGYPGAPLLGDAVSGMATARITSKDFLFWFRSHTAKEVKWGGAKHHPEDKDDGGRMHPRSSFIAFLEVVKSRSLPWEDSEINAIHSLQLIMRDSLQGIGENYMKSVSSPQQNDSDGVRFYELSSMALELVRLVETATVPIFGVDSSGLINGWNAKIAELTGLQANVAIGKYLIDDVTHEDSHETFKALMCRALQGEEDRNVEVKLLKFGNHPTKEVVYLVVNACTSRDYKNDIIGVCFVGQDITPEKAVMDKFVRLQGDYEAIIQSLNPLIPPIFASDENACCSEWNAAMERLTGLVKCEVIGKRLPGEIFGGLCRLKGQDALTKFMILLYQGISGHDTEKLSFGFFDRKGNFIDVFITANKRTDERGNIIGCFCFLQTMAVDHPQISARDIEDDRECLSTLKEFAYIQQQMKNPLNGIRFTHKLLEGTVTSDHQKQFLETSEACEKQILSIIENMDSGGIVDGNRVELKTEEFVIGNVIDAVVSQVMIPLKEKNLQLLHDIPDQIKSLPIYGDQIKLQLVLSDFLLSIVRHAPSPDGWVEIRVSPGLKLIQDGNVFIHIQFRMTHPGQGLPSALIEDMVRGGTRWTTQEGVVLHLSQKLVRMMNGHVHYVREQQKCYFLIDLDFKTQKPRSRESSMDTKAD</sequence>